<organism>
    <name type="scientific">Staphylococcus aureus (strain Mu50 / ATCC 700699)</name>
    <dbReference type="NCBI Taxonomy" id="158878"/>
    <lineage>
        <taxon>Bacteria</taxon>
        <taxon>Bacillati</taxon>
        <taxon>Bacillota</taxon>
        <taxon>Bacilli</taxon>
        <taxon>Bacillales</taxon>
        <taxon>Staphylococcaceae</taxon>
        <taxon>Staphylococcus</taxon>
    </lineage>
</organism>
<dbReference type="EC" id="3.5.3.6" evidence="1"/>
<dbReference type="EMBL" id="BA000017">
    <property type="protein sequence ID" value="BAB58797.1"/>
    <property type="molecule type" value="Genomic_DNA"/>
</dbReference>
<dbReference type="RefSeq" id="WP_000129417.1">
    <property type="nucleotide sequence ID" value="NC_002758.2"/>
</dbReference>
<dbReference type="SMR" id="P63553"/>
<dbReference type="KEGG" id="sav:SAV2635"/>
<dbReference type="HOGENOM" id="CLU_052662_0_1_9"/>
<dbReference type="PhylomeDB" id="P63553"/>
<dbReference type="UniPathway" id="UPA00254">
    <property type="reaction ID" value="UER00364"/>
</dbReference>
<dbReference type="Proteomes" id="UP000002481">
    <property type="component" value="Chromosome"/>
</dbReference>
<dbReference type="GO" id="GO:0005737">
    <property type="term" value="C:cytoplasm"/>
    <property type="evidence" value="ECO:0007669"/>
    <property type="project" value="UniProtKB-SubCell"/>
</dbReference>
<dbReference type="GO" id="GO:0016990">
    <property type="term" value="F:arginine deiminase activity"/>
    <property type="evidence" value="ECO:0007669"/>
    <property type="project" value="UniProtKB-UniRule"/>
</dbReference>
<dbReference type="GO" id="GO:0019547">
    <property type="term" value="P:arginine catabolic process to ornithine"/>
    <property type="evidence" value="ECO:0007669"/>
    <property type="project" value="UniProtKB-UniRule"/>
</dbReference>
<dbReference type="GO" id="GO:0019546">
    <property type="term" value="P:arginine deiminase pathway"/>
    <property type="evidence" value="ECO:0007669"/>
    <property type="project" value="TreeGrafter"/>
</dbReference>
<dbReference type="FunFam" id="1.10.3930.10:FF:000001">
    <property type="entry name" value="Arginine deiminase"/>
    <property type="match status" value="1"/>
</dbReference>
<dbReference type="Gene3D" id="1.10.3930.10">
    <property type="entry name" value="Arginine deiminase"/>
    <property type="match status" value="1"/>
</dbReference>
<dbReference type="Gene3D" id="3.75.10.10">
    <property type="entry name" value="L-arginine/glycine Amidinotransferase, Chain A"/>
    <property type="match status" value="1"/>
</dbReference>
<dbReference type="HAMAP" id="MF_00242">
    <property type="entry name" value="Arg_deiminase"/>
    <property type="match status" value="1"/>
</dbReference>
<dbReference type="InterPro" id="IPR003876">
    <property type="entry name" value="Arg_deiminase"/>
</dbReference>
<dbReference type="NCBIfam" id="TIGR01078">
    <property type="entry name" value="arcA"/>
    <property type="match status" value="1"/>
</dbReference>
<dbReference type="NCBIfam" id="NF002381">
    <property type="entry name" value="PRK01388.1"/>
    <property type="match status" value="1"/>
</dbReference>
<dbReference type="PANTHER" id="PTHR47271">
    <property type="entry name" value="ARGININE DEIMINASE"/>
    <property type="match status" value="1"/>
</dbReference>
<dbReference type="PANTHER" id="PTHR47271:SF2">
    <property type="entry name" value="ARGININE DEIMINASE"/>
    <property type="match status" value="1"/>
</dbReference>
<dbReference type="Pfam" id="PF02274">
    <property type="entry name" value="ADI"/>
    <property type="match status" value="1"/>
</dbReference>
<dbReference type="PIRSF" id="PIRSF006356">
    <property type="entry name" value="Arg_deiminase"/>
    <property type="match status" value="1"/>
</dbReference>
<dbReference type="PRINTS" id="PR01466">
    <property type="entry name" value="ARGDEIMINASE"/>
</dbReference>
<dbReference type="SUPFAM" id="SSF55909">
    <property type="entry name" value="Pentein"/>
    <property type="match status" value="1"/>
</dbReference>
<proteinExistence type="inferred from homology"/>
<sequence length="411" mass="46945">MTDGPIKVNSEIGALKTVLLKRPGKELENLVPDYLDGLLFDDIPYLEVAQKEHDHFAQVLREEGVEVLYLEKLAAESIENPQVRSEFIDDVLAESKKTILGHEEEIKTLFATLSNQELVDKIMSGVRKEEINPKCTHLVEYMDDKYPFYLDPMPNLYFTRDPQASIGHGITINRMFWRARRRESIFIQYIVKHHPRFKDANIPIWLDRDCPFNIEGGDELVLSKDVLAIGVSERTSAQAIEKLARRIFENPQATFKKVVAIEIPTSRTFMHLDTVFTMIDYDKFTMHSAILKAEGNMNIFIIEYDDVNKDIAIKQSSHLKDTLEDVLGIDDIQFIPTGNGDVIDGAREQWNDGSNTLCIRPGVVVTYDRNYVSNDLLRQKGIKVIEISGSELVRGRGGPRCMSQPLFREDI</sequence>
<protein>
    <recommendedName>
        <fullName evidence="1">Arginine deiminase</fullName>
        <shortName evidence="1">ADI</shortName>
        <ecNumber evidence="1">3.5.3.6</ecNumber>
    </recommendedName>
    <alternativeName>
        <fullName evidence="1">Arginine dihydrolase</fullName>
        <shortName evidence="1">AD</shortName>
    </alternativeName>
</protein>
<accession>P63553</accession>
<accession>Q99R02</accession>
<gene>
    <name evidence="1" type="primary">arcA</name>
    <name type="ordered locus">SAV2635</name>
</gene>
<evidence type="ECO:0000255" key="1">
    <source>
        <dbReference type="HAMAP-Rule" id="MF_00242"/>
    </source>
</evidence>
<reference key="1">
    <citation type="journal article" date="2001" name="Lancet">
        <title>Whole genome sequencing of meticillin-resistant Staphylococcus aureus.</title>
        <authorList>
            <person name="Kuroda M."/>
            <person name="Ohta T."/>
            <person name="Uchiyama I."/>
            <person name="Baba T."/>
            <person name="Yuzawa H."/>
            <person name="Kobayashi I."/>
            <person name="Cui L."/>
            <person name="Oguchi A."/>
            <person name="Aoki K."/>
            <person name="Nagai Y."/>
            <person name="Lian J.-Q."/>
            <person name="Ito T."/>
            <person name="Kanamori M."/>
            <person name="Matsumaru H."/>
            <person name="Maruyama A."/>
            <person name="Murakami H."/>
            <person name="Hosoyama A."/>
            <person name="Mizutani-Ui Y."/>
            <person name="Takahashi N.K."/>
            <person name="Sawano T."/>
            <person name="Inoue R."/>
            <person name="Kaito C."/>
            <person name="Sekimizu K."/>
            <person name="Hirakawa H."/>
            <person name="Kuhara S."/>
            <person name="Goto S."/>
            <person name="Yabuzaki J."/>
            <person name="Kanehisa M."/>
            <person name="Yamashita A."/>
            <person name="Oshima K."/>
            <person name="Furuya K."/>
            <person name="Yoshino C."/>
            <person name="Shiba T."/>
            <person name="Hattori M."/>
            <person name="Ogasawara N."/>
            <person name="Hayashi H."/>
            <person name="Hiramatsu K."/>
        </authorList>
    </citation>
    <scope>NUCLEOTIDE SEQUENCE [LARGE SCALE GENOMIC DNA]</scope>
    <source>
        <strain>Mu50 / ATCC 700699</strain>
    </source>
</reference>
<comment type="catalytic activity">
    <reaction evidence="1">
        <text>L-arginine + H2O = L-citrulline + NH4(+)</text>
        <dbReference type="Rhea" id="RHEA:19597"/>
        <dbReference type="ChEBI" id="CHEBI:15377"/>
        <dbReference type="ChEBI" id="CHEBI:28938"/>
        <dbReference type="ChEBI" id="CHEBI:32682"/>
        <dbReference type="ChEBI" id="CHEBI:57743"/>
        <dbReference type="EC" id="3.5.3.6"/>
    </reaction>
</comment>
<comment type="pathway">
    <text evidence="1">Amino-acid degradation; L-arginine degradation via ADI pathway; carbamoyl phosphate from L-arginine: step 1/2.</text>
</comment>
<comment type="subcellular location">
    <subcellularLocation>
        <location evidence="1">Cytoplasm</location>
    </subcellularLocation>
</comment>
<comment type="similarity">
    <text evidence="1">Belongs to the arginine deiminase family.</text>
</comment>
<feature type="chain" id="PRO_0000182235" description="Arginine deiminase">
    <location>
        <begin position="1"/>
        <end position="411"/>
    </location>
</feature>
<feature type="active site" description="Amidino-cysteine intermediate" evidence="1">
    <location>
        <position position="401"/>
    </location>
</feature>
<keyword id="KW-0056">Arginine metabolism</keyword>
<keyword id="KW-0963">Cytoplasm</keyword>
<keyword id="KW-0378">Hydrolase</keyword>
<name>ARCA_STAAM</name>